<sequence length="197" mass="22374">MKLLDARKDHYRKLAHEQGFRSRAAYKLKELNQSYRIIGPGFYVLDLGCAPGGWTQMAIKLAGNQGKVMGIDLSYVEEIPGAEILRGDIEDENVVDDVMNYFERKVNAVICDLSPKVSGNWSVDHAKQISLNYDCTKIMDKVLAHKGNAVFKVFDGEYSMEFRDYVKKKFARINLTKPKASRKQSSELYYVCLGFIG</sequence>
<organism>
    <name type="scientific">Nitrosopumilus maritimus (strain SCM1)</name>
    <dbReference type="NCBI Taxonomy" id="436308"/>
    <lineage>
        <taxon>Archaea</taxon>
        <taxon>Nitrososphaerota</taxon>
        <taxon>Nitrososphaeria</taxon>
        <taxon>Nitrosopumilales</taxon>
        <taxon>Nitrosopumilaceae</taxon>
        <taxon>Nitrosopumilus</taxon>
    </lineage>
</organism>
<keyword id="KW-0963">Cytoplasm</keyword>
<keyword id="KW-0489">Methyltransferase</keyword>
<keyword id="KW-1185">Reference proteome</keyword>
<keyword id="KW-0698">rRNA processing</keyword>
<keyword id="KW-0949">S-adenosyl-L-methionine</keyword>
<keyword id="KW-0808">Transferase</keyword>
<accession>A9A3M9</accession>
<name>RLME_NITMS</name>
<dbReference type="EC" id="2.1.1.166" evidence="1"/>
<dbReference type="EMBL" id="CP000866">
    <property type="protein sequence ID" value="ABX13291.1"/>
    <property type="molecule type" value="Genomic_DNA"/>
</dbReference>
<dbReference type="RefSeq" id="WP_012215778.1">
    <property type="nucleotide sequence ID" value="NC_010085.1"/>
</dbReference>
<dbReference type="SMR" id="A9A3M9"/>
<dbReference type="STRING" id="436308.Nmar_1395"/>
<dbReference type="EnsemblBacteria" id="ABX13291">
    <property type="protein sequence ID" value="ABX13291"/>
    <property type="gene ID" value="Nmar_1395"/>
</dbReference>
<dbReference type="GeneID" id="5774072"/>
<dbReference type="KEGG" id="nmr:Nmar_1395"/>
<dbReference type="eggNOG" id="arCOG00079">
    <property type="taxonomic scope" value="Archaea"/>
</dbReference>
<dbReference type="HOGENOM" id="CLU_009422_4_0_2"/>
<dbReference type="InParanoid" id="A9A3M9"/>
<dbReference type="OrthoDB" id="26307at2157"/>
<dbReference type="PhylomeDB" id="A9A3M9"/>
<dbReference type="Proteomes" id="UP000000792">
    <property type="component" value="Chromosome"/>
</dbReference>
<dbReference type="GO" id="GO:0005737">
    <property type="term" value="C:cytoplasm"/>
    <property type="evidence" value="ECO:0007669"/>
    <property type="project" value="UniProtKB-SubCell"/>
</dbReference>
<dbReference type="GO" id="GO:0008173">
    <property type="term" value="F:RNA methyltransferase activity"/>
    <property type="evidence" value="ECO:0000318"/>
    <property type="project" value="GO_Central"/>
</dbReference>
<dbReference type="GO" id="GO:0008650">
    <property type="term" value="F:rRNA (uridine-2'-O-)-methyltransferase activity"/>
    <property type="evidence" value="ECO:0007669"/>
    <property type="project" value="UniProtKB-UniRule"/>
</dbReference>
<dbReference type="GO" id="GO:0001510">
    <property type="term" value="P:RNA methylation"/>
    <property type="evidence" value="ECO:0000318"/>
    <property type="project" value="GO_Central"/>
</dbReference>
<dbReference type="Gene3D" id="3.40.50.150">
    <property type="entry name" value="Vaccinia Virus protein VP39"/>
    <property type="match status" value="1"/>
</dbReference>
<dbReference type="HAMAP" id="MF_01547">
    <property type="entry name" value="RNA_methyltr_E"/>
    <property type="match status" value="1"/>
</dbReference>
<dbReference type="InterPro" id="IPR050082">
    <property type="entry name" value="RNA_methyltr_RlmE"/>
</dbReference>
<dbReference type="InterPro" id="IPR002877">
    <property type="entry name" value="RNA_MeTrfase_FtsJ_dom"/>
</dbReference>
<dbReference type="InterPro" id="IPR015507">
    <property type="entry name" value="rRNA-MeTfrase_E"/>
</dbReference>
<dbReference type="InterPro" id="IPR029063">
    <property type="entry name" value="SAM-dependent_MTases_sf"/>
</dbReference>
<dbReference type="PANTHER" id="PTHR10920:SF13">
    <property type="entry name" value="PRE-RRNA 2'-O-RIBOSE RNA METHYLTRANSFERASE FTSJ3"/>
    <property type="match status" value="1"/>
</dbReference>
<dbReference type="PANTHER" id="PTHR10920">
    <property type="entry name" value="RIBOSOMAL RNA METHYLTRANSFERASE"/>
    <property type="match status" value="1"/>
</dbReference>
<dbReference type="Pfam" id="PF01728">
    <property type="entry name" value="FtsJ"/>
    <property type="match status" value="1"/>
</dbReference>
<dbReference type="PIRSF" id="PIRSF005461">
    <property type="entry name" value="23S_rRNA_mtase"/>
    <property type="match status" value="1"/>
</dbReference>
<dbReference type="SUPFAM" id="SSF53335">
    <property type="entry name" value="S-adenosyl-L-methionine-dependent methyltransferases"/>
    <property type="match status" value="1"/>
</dbReference>
<gene>
    <name evidence="1" type="primary">rlmE</name>
    <name evidence="1" type="synonym">rrmJ</name>
    <name type="ordered locus">Nmar_1395</name>
</gene>
<reference key="1">
    <citation type="journal article" date="2010" name="Proc. Natl. Acad. Sci. U.S.A.">
        <title>Nitrosopumilus maritimus genome reveals unique mechanisms for nitrification and autotrophy in globally distributed marine crenarchaea.</title>
        <authorList>
            <person name="Walker C.B."/>
            <person name="de la Torre J.R."/>
            <person name="Klotz M.G."/>
            <person name="Urakawa H."/>
            <person name="Pinel N."/>
            <person name="Arp D.J."/>
            <person name="Brochier-Armanet C."/>
            <person name="Chain P.S."/>
            <person name="Chan P.P."/>
            <person name="Gollabgir A."/>
            <person name="Hemp J."/>
            <person name="Hugler M."/>
            <person name="Karr E.A."/>
            <person name="Konneke M."/>
            <person name="Shin M."/>
            <person name="Lawton T.J."/>
            <person name="Lowe T."/>
            <person name="Martens-Habbena W."/>
            <person name="Sayavedra-Soto L.A."/>
            <person name="Lang D."/>
            <person name="Sievert S.M."/>
            <person name="Rosenzweig A.C."/>
            <person name="Manning G."/>
            <person name="Stahl D.A."/>
        </authorList>
    </citation>
    <scope>NUCLEOTIDE SEQUENCE [LARGE SCALE GENOMIC DNA]</scope>
    <source>
        <strain>SCM1</strain>
    </source>
</reference>
<proteinExistence type="inferred from homology"/>
<feature type="chain" id="PRO_1000195036" description="Ribosomal RNA large subunit methyltransferase E">
    <location>
        <begin position="1"/>
        <end position="197"/>
    </location>
</feature>
<feature type="active site" description="Proton acceptor" evidence="1">
    <location>
        <position position="152"/>
    </location>
</feature>
<feature type="binding site" evidence="1">
    <location>
        <position position="52"/>
    </location>
    <ligand>
        <name>S-adenosyl-L-methionine</name>
        <dbReference type="ChEBI" id="CHEBI:59789"/>
    </ligand>
</feature>
<feature type="binding site" evidence="1">
    <location>
        <position position="54"/>
    </location>
    <ligand>
        <name>S-adenosyl-L-methionine</name>
        <dbReference type="ChEBI" id="CHEBI:59789"/>
    </ligand>
</feature>
<feature type="binding site" evidence="1">
    <location>
        <position position="72"/>
    </location>
    <ligand>
        <name>S-adenosyl-L-methionine</name>
        <dbReference type="ChEBI" id="CHEBI:59789"/>
    </ligand>
</feature>
<feature type="binding site" evidence="1">
    <location>
        <position position="88"/>
    </location>
    <ligand>
        <name>S-adenosyl-L-methionine</name>
        <dbReference type="ChEBI" id="CHEBI:59789"/>
    </ligand>
</feature>
<feature type="binding site" evidence="1">
    <location>
        <position position="112"/>
    </location>
    <ligand>
        <name>S-adenosyl-L-methionine</name>
        <dbReference type="ChEBI" id="CHEBI:59789"/>
    </ligand>
</feature>
<comment type="function">
    <text evidence="1">Specifically methylates the uridine in position 2552 of 23S rRNA at the 2'-O position of the ribose in the fully assembled 50S ribosomal subunit.</text>
</comment>
<comment type="catalytic activity">
    <reaction evidence="1">
        <text>uridine(2552) in 23S rRNA + S-adenosyl-L-methionine = 2'-O-methyluridine(2552) in 23S rRNA + S-adenosyl-L-homocysteine + H(+)</text>
        <dbReference type="Rhea" id="RHEA:42720"/>
        <dbReference type="Rhea" id="RHEA-COMP:10202"/>
        <dbReference type="Rhea" id="RHEA-COMP:10203"/>
        <dbReference type="ChEBI" id="CHEBI:15378"/>
        <dbReference type="ChEBI" id="CHEBI:57856"/>
        <dbReference type="ChEBI" id="CHEBI:59789"/>
        <dbReference type="ChEBI" id="CHEBI:65315"/>
        <dbReference type="ChEBI" id="CHEBI:74478"/>
        <dbReference type="EC" id="2.1.1.166"/>
    </reaction>
</comment>
<comment type="subcellular location">
    <subcellularLocation>
        <location evidence="1">Cytoplasm</location>
    </subcellularLocation>
</comment>
<comment type="similarity">
    <text evidence="1">Belongs to the class I-like SAM-binding methyltransferase superfamily. RNA methyltransferase RlmE family.</text>
</comment>
<evidence type="ECO:0000255" key="1">
    <source>
        <dbReference type="HAMAP-Rule" id="MF_01547"/>
    </source>
</evidence>
<protein>
    <recommendedName>
        <fullName evidence="1">Ribosomal RNA large subunit methyltransferase E</fullName>
        <ecNumber evidence="1">2.1.1.166</ecNumber>
    </recommendedName>
    <alternativeName>
        <fullName evidence="1">23S rRNA Um2552 methyltransferase</fullName>
    </alternativeName>
    <alternativeName>
        <fullName evidence="1">rRNA (uridine-2'-O-)-methyltransferase</fullName>
    </alternativeName>
</protein>